<comment type="function">
    <text evidence="1">Catalyzes the transfer of the enolpyruvyl moiety of phosphoenolpyruvate (PEP) to the 5-hydroxyl of shikimate-3-phosphate (S3P) to produce enolpyruvyl shikimate-3-phosphate and inorganic phosphate.</text>
</comment>
<comment type="catalytic activity">
    <reaction evidence="1">
        <text>3-phosphoshikimate + phosphoenolpyruvate = 5-O-(1-carboxyvinyl)-3-phosphoshikimate + phosphate</text>
        <dbReference type="Rhea" id="RHEA:21256"/>
        <dbReference type="ChEBI" id="CHEBI:43474"/>
        <dbReference type="ChEBI" id="CHEBI:57701"/>
        <dbReference type="ChEBI" id="CHEBI:58702"/>
        <dbReference type="ChEBI" id="CHEBI:145989"/>
        <dbReference type="EC" id="2.5.1.19"/>
    </reaction>
    <physiologicalReaction direction="left-to-right" evidence="1">
        <dbReference type="Rhea" id="RHEA:21257"/>
    </physiologicalReaction>
</comment>
<comment type="pathway">
    <text evidence="1">Metabolic intermediate biosynthesis; chorismate biosynthesis; chorismate from D-erythrose 4-phosphate and phosphoenolpyruvate: step 6/7.</text>
</comment>
<comment type="subunit">
    <text evidence="1">Monomer.</text>
</comment>
<comment type="subcellular location">
    <subcellularLocation>
        <location evidence="1">Cytoplasm</location>
    </subcellularLocation>
</comment>
<comment type="similarity">
    <text evidence="1">Belongs to the EPSP synthase family.</text>
</comment>
<dbReference type="EC" id="2.5.1.19" evidence="1"/>
<dbReference type="EMBL" id="AM884177">
    <property type="protein sequence ID" value="CAP07015.1"/>
    <property type="molecule type" value="Genomic_DNA"/>
</dbReference>
<dbReference type="RefSeq" id="WP_009873759.1">
    <property type="nucleotide sequence ID" value="NC_010280.2"/>
</dbReference>
<dbReference type="SMR" id="B0BC00"/>
<dbReference type="KEGG" id="ctl:CTLon_0618"/>
<dbReference type="HOGENOM" id="CLU_024321_0_0_0"/>
<dbReference type="UniPathway" id="UPA00053">
    <property type="reaction ID" value="UER00089"/>
</dbReference>
<dbReference type="Proteomes" id="UP001154401">
    <property type="component" value="Chromosome"/>
</dbReference>
<dbReference type="GO" id="GO:0005737">
    <property type="term" value="C:cytoplasm"/>
    <property type="evidence" value="ECO:0007669"/>
    <property type="project" value="UniProtKB-SubCell"/>
</dbReference>
<dbReference type="GO" id="GO:0003866">
    <property type="term" value="F:3-phosphoshikimate 1-carboxyvinyltransferase activity"/>
    <property type="evidence" value="ECO:0007669"/>
    <property type="project" value="UniProtKB-UniRule"/>
</dbReference>
<dbReference type="GO" id="GO:0008652">
    <property type="term" value="P:amino acid biosynthetic process"/>
    <property type="evidence" value="ECO:0007669"/>
    <property type="project" value="UniProtKB-KW"/>
</dbReference>
<dbReference type="GO" id="GO:0009073">
    <property type="term" value="P:aromatic amino acid family biosynthetic process"/>
    <property type="evidence" value="ECO:0007669"/>
    <property type="project" value="UniProtKB-KW"/>
</dbReference>
<dbReference type="GO" id="GO:0009423">
    <property type="term" value="P:chorismate biosynthetic process"/>
    <property type="evidence" value="ECO:0007669"/>
    <property type="project" value="UniProtKB-UniRule"/>
</dbReference>
<dbReference type="CDD" id="cd01556">
    <property type="entry name" value="EPSP_synthase"/>
    <property type="match status" value="1"/>
</dbReference>
<dbReference type="FunFam" id="3.65.10.10:FF:000020">
    <property type="entry name" value="3-phosphoshikimate 1-carboxyvinyltransferase"/>
    <property type="match status" value="1"/>
</dbReference>
<dbReference type="Gene3D" id="3.65.10.10">
    <property type="entry name" value="Enolpyruvate transferase domain"/>
    <property type="match status" value="2"/>
</dbReference>
<dbReference type="HAMAP" id="MF_00210">
    <property type="entry name" value="EPSP_synth"/>
    <property type="match status" value="1"/>
</dbReference>
<dbReference type="InterPro" id="IPR001986">
    <property type="entry name" value="Enolpyruvate_Tfrase_dom"/>
</dbReference>
<dbReference type="InterPro" id="IPR036968">
    <property type="entry name" value="Enolpyruvate_Tfrase_sf"/>
</dbReference>
<dbReference type="InterPro" id="IPR006264">
    <property type="entry name" value="EPSP_synthase"/>
</dbReference>
<dbReference type="InterPro" id="IPR023193">
    <property type="entry name" value="EPSP_synthase_CS"/>
</dbReference>
<dbReference type="InterPro" id="IPR013792">
    <property type="entry name" value="RNA3'P_cycl/enolpyr_Trfase_a/b"/>
</dbReference>
<dbReference type="NCBIfam" id="TIGR01356">
    <property type="entry name" value="aroA"/>
    <property type="match status" value="1"/>
</dbReference>
<dbReference type="PANTHER" id="PTHR21090">
    <property type="entry name" value="AROM/DEHYDROQUINATE SYNTHASE"/>
    <property type="match status" value="1"/>
</dbReference>
<dbReference type="PANTHER" id="PTHR21090:SF5">
    <property type="entry name" value="PENTAFUNCTIONAL AROM POLYPEPTIDE"/>
    <property type="match status" value="1"/>
</dbReference>
<dbReference type="Pfam" id="PF00275">
    <property type="entry name" value="EPSP_synthase"/>
    <property type="match status" value="1"/>
</dbReference>
<dbReference type="PIRSF" id="PIRSF000505">
    <property type="entry name" value="EPSPS"/>
    <property type="match status" value="1"/>
</dbReference>
<dbReference type="SUPFAM" id="SSF55205">
    <property type="entry name" value="EPT/RTPC-like"/>
    <property type="match status" value="1"/>
</dbReference>
<dbReference type="PROSITE" id="PS00104">
    <property type="entry name" value="EPSP_SYNTHASE_1"/>
    <property type="match status" value="1"/>
</dbReference>
<dbReference type="PROSITE" id="PS00885">
    <property type="entry name" value="EPSP_SYNTHASE_2"/>
    <property type="match status" value="1"/>
</dbReference>
<gene>
    <name evidence="1" type="primary">aroA</name>
    <name type="ordered locus">CTLon_0618</name>
</gene>
<proteinExistence type="inferred from homology"/>
<keyword id="KW-0028">Amino-acid biosynthesis</keyword>
<keyword id="KW-0057">Aromatic amino acid biosynthesis</keyword>
<keyword id="KW-0963">Cytoplasm</keyword>
<keyword id="KW-0808">Transferase</keyword>
<name>AROA_CHLTB</name>
<accession>B0BC00</accession>
<evidence type="ECO:0000255" key="1">
    <source>
        <dbReference type="HAMAP-Rule" id="MF_00210"/>
    </source>
</evidence>
<organism>
    <name type="scientific">Chlamydia trachomatis serovar L2b (strain UCH-1/proctitis)</name>
    <dbReference type="NCBI Taxonomy" id="471473"/>
    <lineage>
        <taxon>Bacteria</taxon>
        <taxon>Pseudomonadati</taxon>
        <taxon>Chlamydiota</taxon>
        <taxon>Chlamydiia</taxon>
        <taxon>Chlamydiales</taxon>
        <taxon>Chlamydiaceae</taxon>
        <taxon>Chlamydia/Chlamydophila group</taxon>
        <taxon>Chlamydia</taxon>
    </lineage>
</organism>
<protein>
    <recommendedName>
        <fullName evidence="1">3-phosphoshikimate 1-carboxyvinyltransferase</fullName>
        <ecNumber evidence="1">2.5.1.19</ecNumber>
    </recommendedName>
    <alternativeName>
        <fullName evidence="1">5-enolpyruvylshikimate-3-phosphate synthase</fullName>
        <shortName evidence="1">EPSP synthase</shortName>
        <shortName evidence="1">EPSPS</shortName>
    </alternativeName>
</protein>
<reference key="1">
    <citation type="journal article" date="2008" name="Genome Res.">
        <title>Chlamydia trachomatis: genome sequence analysis of lymphogranuloma venereum isolates.</title>
        <authorList>
            <person name="Thomson N.R."/>
            <person name="Holden M.T.G."/>
            <person name="Carder C."/>
            <person name="Lennard N."/>
            <person name="Lockey S.J."/>
            <person name="Marsh P."/>
            <person name="Skipp P."/>
            <person name="O'Connor C.D."/>
            <person name="Goodhead I."/>
            <person name="Norbertzcak H."/>
            <person name="Harris B."/>
            <person name="Ormond D."/>
            <person name="Rance R."/>
            <person name="Quail M.A."/>
            <person name="Parkhill J."/>
            <person name="Stephens R.S."/>
            <person name="Clarke I.N."/>
        </authorList>
    </citation>
    <scope>NUCLEOTIDE SEQUENCE [LARGE SCALE GENOMIC DNA]</scope>
    <source>
        <strain>UCH-1/proctitis</strain>
    </source>
</reference>
<feature type="chain" id="PRO_1000099684" description="3-phosphoshikimate 1-carboxyvinyltransferase">
    <location>
        <begin position="1"/>
        <end position="440"/>
    </location>
</feature>
<feature type="active site" description="Proton acceptor" evidence="1">
    <location>
        <position position="310"/>
    </location>
</feature>
<feature type="binding site" evidence="1">
    <location>
        <position position="25"/>
    </location>
    <ligand>
        <name>3-phosphoshikimate</name>
        <dbReference type="ChEBI" id="CHEBI:145989"/>
    </ligand>
</feature>
<feature type="binding site" evidence="1">
    <location>
        <position position="25"/>
    </location>
    <ligand>
        <name>phosphoenolpyruvate</name>
        <dbReference type="ChEBI" id="CHEBI:58702"/>
    </ligand>
</feature>
<feature type="binding site" evidence="1">
    <location>
        <position position="26"/>
    </location>
    <ligand>
        <name>3-phosphoshikimate</name>
        <dbReference type="ChEBI" id="CHEBI:145989"/>
    </ligand>
</feature>
<feature type="binding site" evidence="1">
    <location>
        <position position="30"/>
    </location>
    <ligand>
        <name>3-phosphoshikimate</name>
        <dbReference type="ChEBI" id="CHEBI:145989"/>
    </ligand>
</feature>
<feature type="binding site" evidence="1">
    <location>
        <position position="96"/>
    </location>
    <ligand>
        <name>phosphoenolpyruvate</name>
        <dbReference type="ChEBI" id="CHEBI:58702"/>
    </ligand>
</feature>
<feature type="binding site" evidence="1">
    <location>
        <position position="124"/>
    </location>
    <ligand>
        <name>phosphoenolpyruvate</name>
        <dbReference type="ChEBI" id="CHEBI:58702"/>
    </ligand>
</feature>
<feature type="binding site" evidence="1">
    <location>
        <position position="168"/>
    </location>
    <ligand>
        <name>3-phosphoshikimate</name>
        <dbReference type="ChEBI" id="CHEBI:145989"/>
    </ligand>
</feature>
<feature type="binding site" evidence="1">
    <location>
        <position position="169"/>
    </location>
    <ligand>
        <name>3-phosphoshikimate</name>
        <dbReference type="ChEBI" id="CHEBI:145989"/>
    </ligand>
</feature>
<feature type="binding site" evidence="1">
    <location>
        <position position="169"/>
    </location>
    <ligand>
        <name>phosphoenolpyruvate</name>
        <dbReference type="ChEBI" id="CHEBI:58702"/>
    </ligand>
</feature>
<feature type="binding site" evidence="1">
    <location>
        <position position="310"/>
    </location>
    <ligand>
        <name>3-phosphoshikimate</name>
        <dbReference type="ChEBI" id="CHEBI:145989"/>
    </ligand>
</feature>
<feature type="binding site" evidence="1">
    <location>
        <position position="337"/>
    </location>
    <ligand>
        <name>3-phosphoshikimate</name>
        <dbReference type="ChEBI" id="CHEBI:145989"/>
    </ligand>
</feature>
<feature type="binding site" evidence="1">
    <location>
        <position position="341"/>
    </location>
    <ligand>
        <name>phosphoenolpyruvate</name>
        <dbReference type="ChEBI" id="CHEBI:58702"/>
    </ligand>
</feature>
<feature type="binding site" evidence="1">
    <location>
        <position position="382"/>
    </location>
    <ligand>
        <name>phosphoenolpyruvate</name>
        <dbReference type="ChEBI" id="CHEBI:58702"/>
    </ligand>
</feature>
<feature type="binding site" evidence="1">
    <location>
        <position position="409"/>
    </location>
    <ligand>
        <name>phosphoenolpyruvate</name>
        <dbReference type="ChEBI" id="CHEBI:58702"/>
    </ligand>
</feature>
<sequence length="440" mass="47770">MVSSNQALLISPSIPYGEIAVPPSKSHSLRAILFASLSKGTSIIENCLFSPDSQTMLTACEKMGAHVRRIGDSLHIQGNPDPHHCHPPYFHMGNSGIALRFLTALSTLSPTPTLITGSHTLKRRPIAPLLSSLKQLGAHIRQKTSSSIPFTIHGPLSPGHVTISGQDSQYASALAITAALAPYPLSFSIENLKERPWFDLTLDWLHSLNISFLRDQDSLTFPGGQSLESFSYSVPGDYSSAAFLASFGLLSSSSKPTILRNLPSQDSQGDKLLFSLLKQLGAHILIEKHHIEMHPSSFSGGEIDMDPFIDALPILAVLCCFAKNPSRLYNALGAKDKESNRIEAIAHELQKMGGSVHPTRDGLYIEPSRLHGAVVDSHNDHRIAMALAVAGVHASSGQTLLCNTQCINKSFPHFVIAAQTLHANVRHYQADFPLRSSFCR</sequence>